<comment type="similarity">
    <text evidence="3">Belongs to the LovG family.</text>
</comment>
<sequence length="279" mass="30634">MTNNDAAVEAAGSSRASSSKQQLKLEITEKVRVLCLHGYRQNGEAFKNKLGSFRKFANKYAEFVFITAPHVAKALESAAEPVPEQRSWWANKDDGSFKGTNKGGPAFGFQESLRCVEEAWRTQGPFQGLLGFSQGACFVGLICGLAKKKLTSIRPEFAVLASGFLSGSLVHMSAYEEAISIPTLHIYGQTDEIIPKEMSESLAARFKNAEVLEHSGGHYFPATAQQKQTFINFFQDRLQEYLEHEELQQSGNASFVDSGAEDDNDAEVAAMTAELDESD</sequence>
<name>LOVG_DROME</name>
<gene>
    <name type="ORF">CG5412</name>
</gene>
<keyword id="KW-0378">Hydrolase</keyword>
<keyword id="KW-1185">Reference proteome</keyword>
<organism>
    <name type="scientific">Drosophila melanogaster</name>
    <name type="common">Fruit fly</name>
    <dbReference type="NCBI Taxonomy" id="7227"/>
    <lineage>
        <taxon>Eukaryota</taxon>
        <taxon>Metazoa</taxon>
        <taxon>Ecdysozoa</taxon>
        <taxon>Arthropoda</taxon>
        <taxon>Hexapoda</taxon>
        <taxon>Insecta</taxon>
        <taxon>Pterygota</taxon>
        <taxon>Neoptera</taxon>
        <taxon>Endopterygota</taxon>
        <taxon>Diptera</taxon>
        <taxon>Brachycera</taxon>
        <taxon>Muscomorpha</taxon>
        <taxon>Ephydroidea</taxon>
        <taxon>Drosophilidae</taxon>
        <taxon>Drosophila</taxon>
        <taxon>Sophophora</taxon>
    </lineage>
</organism>
<proteinExistence type="evidence at transcript level"/>
<feature type="chain" id="PRO_0000300881" description="Esterase CG5412">
    <location>
        <begin position="1"/>
        <end position="279"/>
    </location>
</feature>
<feature type="region of interest" description="Disordered" evidence="2">
    <location>
        <begin position="249"/>
        <end position="279"/>
    </location>
</feature>
<feature type="active site" description="Charge relay system" evidence="1">
    <location>
        <position position="133"/>
    </location>
</feature>
<feature type="active site" description="Charge relay system" evidence="1">
    <location>
        <position position="191"/>
    </location>
</feature>
<feature type="active site" description="Charge relay system" evidence="1">
    <location>
        <position position="218"/>
    </location>
</feature>
<reference key="1">
    <citation type="journal article" date="2000" name="Science">
        <title>The genome sequence of Drosophila melanogaster.</title>
        <authorList>
            <person name="Adams M.D."/>
            <person name="Celniker S.E."/>
            <person name="Holt R.A."/>
            <person name="Evans C.A."/>
            <person name="Gocayne J.D."/>
            <person name="Amanatides P.G."/>
            <person name="Scherer S.E."/>
            <person name="Li P.W."/>
            <person name="Hoskins R.A."/>
            <person name="Galle R.F."/>
            <person name="George R.A."/>
            <person name="Lewis S.E."/>
            <person name="Richards S."/>
            <person name="Ashburner M."/>
            <person name="Henderson S.N."/>
            <person name="Sutton G.G."/>
            <person name="Wortman J.R."/>
            <person name="Yandell M.D."/>
            <person name="Zhang Q."/>
            <person name="Chen L.X."/>
            <person name="Brandon R.C."/>
            <person name="Rogers Y.-H.C."/>
            <person name="Blazej R.G."/>
            <person name="Champe M."/>
            <person name="Pfeiffer B.D."/>
            <person name="Wan K.H."/>
            <person name="Doyle C."/>
            <person name="Baxter E.G."/>
            <person name="Helt G."/>
            <person name="Nelson C.R."/>
            <person name="Miklos G.L.G."/>
            <person name="Abril J.F."/>
            <person name="Agbayani A."/>
            <person name="An H.-J."/>
            <person name="Andrews-Pfannkoch C."/>
            <person name="Baldwin D."/>
            <person name="Ballew R.M."/>
            <person name="Basu A."/>
            <person name="Baxendale J."/>
            <person name="Bayraktaroglu L."/>
            <person name="Beasley E.M."/>
            <person name="Beeson K.Y."/>
            <person name="Benos P.V."/>
            <person name="Berman B.P."/>
            <person name="Bhandari D."/>
            <person name="Bolshakov S."/>
            <person name="Borkova D."/>
            <person name="Botchan M.R."/>
            <person name="Bouck J."/>
            <person name="Brokstein P."/>
            <person name="Brottier P."/>
            <person name="Burtis K.C."/>
            <person name="Busam D.A."/>
            <person name="Butler H."/>
            <person name="Cadieu E."/>
            <person name="Center A."/>
            <person name="Chandra I."/>
            <person name="Cherry J.M."/>
            <person name="Cawley S."/>
            <person name="Dahlke C."/>
            <person name="Davenport L.B."/>
            <person name="Davies P."/>
            <person name="de Pablos B."/>
            <person name="Delcher A."/>
            <person name="Deng Z."/>
            <person name="Mays A.D."/>
            <person name="Dew I."/>
            <person name="Dietz S.M."/>
            <person name="Dodson K."/>
            <person name="Doup L.E."/>
            <person name="Downes M."/>
            <person name="Dugan-Rocha S."/>
            <person name="Dunkov B.C."/>
            <person name="Dunn P."/>
            <person name="Durbin K.J."/>
            <person name="Evangelista C.C."/>
            <person name="Ferraz C."/>
            <person name="Ferriera S."/>
            <person name="Fleischmann W."/>
            <person name="Fosler C."/>
            <person name="Gabrielian A.E."/>
            <person name="Garg N.S."/>
            <person name="Gelbart W.M."/>
            <person name="Glasser K."/>
            <person name="Glodek A."/>
            <person name="Gong F."/>
            <person name="Gorrell J.H."/>
            <person name="Gu Z."/>
            <person name="Guan P."/>
            <person name="Harris M."/>
            <person name="Harris N.L."/>
            <person name="Harvey D.A."/>
            <person name="Heiman T.J."/>
            <person name="Hernandez J.R."/>
            <person name="Houck J."/>
            <person name="Hostin D."/>
            <person name="Houston K.A."/>
            <person name="Howland T.J."/>
            <person name="Wei M.-H."/>
            <person name="Ibegwam C."/>
            <person name="Jalali M."/>
            <person name="Kalush F."/>
            <person name="Karpen G.H."/>
            <person name="Ke Z."/>
            <person name="Kennison J.A."/>
            <person name="Ketchum K.A."/>
            <person name="Kimmel B.E."/>
            <person name="Kodira C.D."/>
            <person name="Kraft C.L."/>
            <person name="Kravitz S."/>
            <person name="Kulp D."/>
            <person name="Lai Z."/>
            <person name="Lasko P."/>
            <person name="Lei Y."/>
            <person name="Levitsky A.A."/>
            <person name="Li J.H."/>
            <person name="Li Z."/>
            <person name="Liang Y."/>
            <person name="Lin X."/>
            <person name="Liu X."/>
            <person name="Mattei B."/>
            <person name="McIntosh T.C."/>
            <person name="McLeod M.P."/>
            <person name="McPherson D."/>
            <person name="Merkulov G."/>
            <person name="Milshina N.V."/>
            <person name="Mobarry C."/>
            <person name="Morris J."/>
            <person name="Moshrefi A."/>
            <person name="Mount S.M."/>
            <person name="Moy M."/>
            <person name="Murphy B."/>
            <person name="Murphy L."/>
            <person name="Muzny D.M."/>
            <person name="Nelson D.L."/>
            <person name="Nelson D.R."/>
            <person name="Nelson K.A."/>
            <person name="Nixon K."/>
            <person name="Nusskern D.R."/>
            <person name="Pacleb J.M."/>
            <person name="Palazzolo M."/>
            <person name="Pittman G.S."/>
            <person name="Pan S."/>
            <person name="Pollard J."/>
            <person name="Puri V."/>
            <person name="Reese M.G."/>
            <person name="Reinert K."/>
            <person name="Remington K."/>
            <person name="Saunders R.D.C."/>
            <person name="Scheeler F."/>
            <person name="Shen H."/>
            <person name="Shue B.C."/>
            <person name="Siden-Kiamos I."/>
            <person name="Simpson M."/>
            <person name="Skupski M.P."/>
            <person name="Smith T.J."/>
            <person name="Spier E."/>
            <person name="Spradling A.C."/>
            <person name="Stapleton M."/>
            <person name="Strong R."/>
            <person name="Sun E."/>
            <person name="Svirskas R."/>
            <person name="Tector C."/>
            <person name="Turner R."/>
            <person name="Venter E."/>
            <person name="Wang A.H."/>
            <person name="Wang X."/>
            <person name="Wang Z.-Y."/>
            <person name="Wassarman D.A."/>
            <person name="Weinstock G.M."/>
            <person name="Weissenbach J."/>
            <person name="Williams S.M."/>
            <person name="Woodage T."/>
            <person name="Worley K.C."/>
            <person name="Wu D."/>
            <person name="Yang S."/>
            <person name="Yao Q.A."/>
            <person name="Ye J."/>
            <person name="Yeh R.-F."/>
            <person name="Zaveri J.S."/>
            <person name="Zhan M."/>
            <person name="Zhang G."/>
            <person name="Zhao Q."/>
            <person name="Zheng L."/>
            <person name="Zheng X.H."/>
            <person name="Zhong F.N."/>
            <person name="Zhong W."/>
            <person name="Zhou X."/>
            <person name="Zhu S.C."/>
            <person name="Zhu X."/>
            <person name="Smith H.O."/>
            <person name="Gibbs R.A."/>
            <person name="Myers E.W."/>
            <person name="Rubin G.M."/>
            <person name="Venter J.C."/>
        </authorList>
    </citation>
    <scope>NUCLEOTIDE SEQUENCE [LARGE SCALE GENOMIC DNA]</scope>
    <source>
        <strain>Berkeley</strain>
    </source>
</reference>
<reference key="2">
    <citation type="journal article" date="2002" name="Genome Biol.">
        <title>Annotation of the Drosophila melanogaster euchromatic genome: a systematic review.</title>
        <authorList>
            <person name="Misra S."/>
            <person name="Crosby M.A."/>
            <person name="Mungall C.J."/>
            <person name="Matthews B.B."/>
            <person name="Campbell K.S."/>
            <person name="Hradecky P."/>
            <person name="Huang Y."/>
            <person name="Kaminker J.S."/>
            <person name="Millburn G.H."/>
            <person name="Prochnik S.E."/>
            <person name="Smith C.D."/>
            <person name="Tupy J.L."/>
            <person name="Whitfield E.J."/>
            <person name="Bayraktaroglu L."/>
            <person name="Berman B.P."/>
            <person name="Bettencourt B.R."/>
            <person name="Celniker S.E."/>
            <person name="de Grey A.D.N.J."/>
            <person name="Drysdale R.A."/>
            <person name="Harris N.L."/>
            <person name="Richter J."/>
            <person name="Russo S."/>
            <person name="Schroeder A.J."/>
            <person name="Shu S.Q."/>
            <person name="Stapleton M."/>
            <person name="Yamada C."/>
            <person name="Ashburner M."/>
            <person name="Gelbart W.M."/>
            <person name="Rubin G.M."/>
            <person name="Lewis S.E."/>
        </authorList>
    </citation>
    <scope>GENOME REANNOTATION</scope>
    <source>
        <strain>Berkeley</strain>
    </source>
</reference>
<reference key="3">
    <citation type="journal article" date="2002" name="Genome Biol.">
        <title>A Drosophila full-length cDNA resource.</title>
        <authorList>
            <person name="Stapleton M."/>
            <person name="Carlson J.W."/>
            <person name="Brokstein P."/>
            <person name="Yu C."/>
            <person name="Champe M."/>
            <person name="George R.A."/>
            <person name="Guarin H."/>
            <person name="Kronmiller B."/>
            <person name="Pacleb J.M."/>
            <person name="Park S."/>
            <person name="Wan K.H."/>
            <person name="Rubin G.M."/>
            <person name="Celniker S.E."/>
        </authorList>
    </citation>
    <scope>NUCLEOTIDE SEQUENCE [LARGE SCALE MRNA]</scope>
    <source>
        <strain>Berkeley</strain>
        <tissue>Head</tissue>
    </source>
</reference>
<accession>Q9VDL1</accession>
<dbReference type="EC" id="3.1.2.-" evidence="3"/>
<dbReference type="EMBL" id="AE014297">
    <property type="protein sequence ID" value="AAF55780.1"/>
    <property type="molecule type" value="Genomic_DNA"/>
</dbReference>
<dbReference type="EMBL" id="AY094682">
    <property type="protein sequence ID" value="AAM11035.1"/>
    <property type="molecule type" value="mRNA"/>
</dbReference>
<dbReference type="RefSeq" id="NP_650895.1">
    <property type="nucleotide sequence ID" value="NM_142638.3"/>
</dbReference>
<dbReference type="SMR" id="Q9VDL1"/>
<dbReference type="BioGRID" id="67412">
    <property type="interactions" value="1"/>
</dbReference>
<dbReference type="FunCoup" id="Q9VDL1">
    <property type="interactions" value="1164"/>
</dbReference>
<dbReference type="IntAct" id="Q9VDL1">
    <property type="interactions" value="2"/>
</dbReference>
<dbReference type="STRING" id="7227.FBpp0083317"/>
<dbReference type="ESTHER" id="drome-CG5412">
    <property type="family name" value="FSH1"/>
</dbReference>
<dbReference type="PaxDb" id="7227-FBpp0083317"/>
<dbReference type="DNASU" id="42434"/>
<dbReference type="EnsemblMetazoa" id="FBtr0083909">
    <property type="protein sequence ID" value="FBpp0083317"/>
    <property type="gene ID" value="FBgn0038806"/>
</dbReference>
<dbReference type="GeneID" id="42434"/>
<dbReference type="KEGG" id="dme:Dmel_CG5412"/>
<dbReference type="UCSC" id="CG5412-RA">
    <property type="organism name" value="d. melanogaster"/>
</dbReference>
<dbReference type="AGR" id="FB:FBgn0038806"/>
<dbReference type="FlyBase" id="FBgn0038806">
    <property type="gene designation" value="CG5412"/>
</dbReference>
<dbReference type="VEuPathDB" id="VectorBase:FBgn0038806"/>
<dbReference type="eggNOG" id="KOG2551">
    <property type="taxonomic scope" value="Eukaryota"/>
</dbReference>
<dbReference type="GeneTree" id="ENSGT00390000003541"/>
<dbReference type="HOGENOM" id="CLU_051938_2_3_1"/>
<dbReference type="InParanoid" id="Q9VDL1"/>
<dbReference type="OMA" id="EEPRGWW"/>
<dbReference type="OrthoDB" id="414698at2759"/>
<dbReference type="PhylomeDB" id="Q9VDL1"/>
<dbReference type="BioGRID-ORCS" id="42434">
    <property type="hits" value="0 hits in 1 CRISPR screen"/>
</dbReference>
<dbReference type="GenomeRNAi" id="42434"/>
<dbReference type="PRO" id="PR:Q9VDL1"/>
<dbReference type="Proteomes" id="UP000000803">
    <property type="component" value="Chromosome 3R"/>
</dbReference>
<dbReference type="Bgee" id="FBgn0038806">
    <property type="expression patterns" value="Expressed in T neuron T5d (Drosophila) in embryonic/larval optic lobe (Drosophila) and 92 other cell types or tissues"/>
</dbReference>
<dbReference type="GO" id="GO:0005737">
    <property type="term" value="C:cytoplasm"/>
    <property type="evidence" value="ECO:0000318"/>
    <property type="project" value="GO_Central"/>
</dbReference>
<dbReference type="GO" id="GO:0005634">
    <property type="term" value="C:nucleus"/>
    <property type="evidence" value="ECO:0000318"/>
    <property type="project" value="GO_Central"/>
</dbReference>
<dbReference type="GO" id="GO:0016787">
    <property type="term" value="F:hydrolase activity"/>
    <property type="evidence" value="ECO:0000318"/>
    <property type="project" value="GO_Central"/>
</dbReference>
<dbReference type="GO" id="GO:0004622">
    <property type="term" value="F:lysophospholipase activity"/>
    <property type="evidence" value="ECO:0000250"/>
    <property type="project" value="FlyBase"/>
</dbReference>
<dbReference type="GO" id="GO:0017171">
    <property type="term" value="F:serine hydrolase activity"/>
    <property type="evidence" value="ECO:0007005"/>
    <property type="project" value="FlyBase"/>
</dbReference>
<dbReference type="FunFam" id="3.40.50.1820:FF:000073">
    <property type="entry name" value="esterase OVCA2 isoform X6"/>
    <property type="match status" value="1"/>
</dbReference>
<dbReference type="Gene3D" id="3.40.50.1820">
    <property type="entry name" value="alpha/beta hydrolase"/>
    <property type="match status" value="1"/>
</dbReference>
<dbReference type="InterPro" id="IPR029058">
    <property type="entry name" value="AB_hydrolase_fold"/>
</dbReference>
<dbReference type="InterPro" id="IPR005645">
    <property type="entry name" value="FSH-like_dom"/>
</dbReference>
<dbReference type="InterPro" id="IPR050593">
    <property type="entry name" value="LovG"/>
</dbReference>
<dbReference type="PANTHER" id="PTHR48070">
    <property type="entry name" value="ESTERASE OVCA2"/>
    <property type="match status" value="1"/>
</dbReference>
<dbReference type="PANTHER" id="PTHR48070:SF6">
    <property type="entry name" value="ESTERASE OVCA2"/>
    <property type="match status" value="1"/>
</dbReference>
<dbReference type="Pfam" id="PF03959">
    <property type="entry name" value="FSH1"/>
    <property type="match status" value="1"/>
</dbReference>
<dbReference type="SUPFAM" id="SSF53474">
    <property type="entry name" value="alpha/beta-Hydrolases"/>
    <property type="match status" value="1"/>
</dbReference>
<protein>
    <recommendedName>
        <fullName>Esterase CG5412</fullName>
        <ecNumber evidence="3">3.1.2.-</ecNumber>
    </recommendedName>
</protein>
<evidence type="ECO:0000250" key="1">
    <source>
        <dbReference type="UniProtKB" id="P38777"/>
    </source>
</evidence>
<evidence type="ECO:0000256" key="2">
    <source>
        <dbReference type="SAM" id="MobiDB-lite"/>
    </source>
</evidence>
<evidence type="ECO:0000305" key="3"/>